<sequence>MDEDGNLQISNSNYNGEEEGEDPENNTLNQPLLKRHRTLSSTPLALVGAKVSHIESLDYEINENDLFKHDWRSRSKAQVFQYIFLKWTLACLVGLFTGLIATLINLAVENIAGYKLLAVGYYIAQDRFWTGLMVFTGANLGLTLVATVLVVYFAPTAAGPGIPEIKAYLNGIDTPNMFGFTTMMVKIVGSIGAVAAGLDLGKEGPLVHIGSCIASLLGQGGPDNHRIKWRWLRYFNNDRDRRDLITCGSASGVCAAFRSPVGGVLFALEEVATWWRSALLWRTFFSTAVVVVVLRAFIEICNSGKCGLFGSGGLIMFDVSHVEVRYHAADIIPVTLIGVFGGILGSLYNHLLHKVLRLYNLINQKGKIHKVLLSLGVSLFTSVCLFGLPFLAECKPCDPSIDEICPTNGRSGNFKQFNCPNGYYNDLSTLLLTTNDDAVRNIFSSNTPNEFGMVSLWIFFGLYCILGLITFGIATPSGLFLPIILMGSAYGRMLGTAMGSYTNIDQGLYAVLGAASLMAGSMRMTVSLCVIFLELTNNLLLLPITMFVLLIAKTVGDSFNLSIYEIILHLKGLPFLEANPEPWMRNLTVGELNDAKPPVVTLNGVEKVANIVDVLRNTTHNAFPVLDGADQNTGTELHGLILRAHLVKVLKKRWFLNEKRRTEEWEVREKFTPVELAEREDNFDDVAITSSEMQLYVDLHPLTNTTPYTVVQSMSVAKALVLFRSVGLRHLLVVPKIQASGMSPVIGILTRQDLRAYNILQAFPHLDKHKSGKAR</sequence>
<gene>
    <name type="primary">CLC-A</name>
    <name type="synonym">CBSCLC5</name>
    <name type="ordered locus">At5g40890</name>
    <name type="ORF">MHK7.12</name>
</gene>
<keyword id="KW-0002">3D-structure</keyword>
<keyword id="KW-0025">Alternative splicing</keyword>
<keyword id="KW-0129">CBS domain</keyword>
<keyword id="KW-0868">Chloride</keyword>
<keyword id="KW-0869">Chloride channel</keyword>
<keyword id="KW-0407">Ion channel</keyword>
<keyword id="KW-0406">Ion transport</keyword>
<keyword id="KW-0472">Membrane</keyword>
<keyword id="KW-1185">Reference proteome</keyword>
<keyword id="KW-0677">Repeat</keyword>
<keyword id="KW-0812">Transmembrane</keyword>
<keyword id="KW-1133">Transmembrane helix</keyword>
<keyword id="KW-0813">Transport</keyword>
<keyword id="KW-0851">Voltage-gated channel</keyword>
<comment type="function">
    <text evidence="5">Voltage-gated chloride channel that could play a role in the regulation of nitrate content.</text>
</comment>
<comment type="subunit">
    <text evidence="1 6">Homodimer (By similarity). Interacts with PP2A5 (PubMed:27676158).</text>
</comment>
<comment type="subcellular location">
    <subcellularLocation>
        <location>Membrane</location>
        <topology>Multi-pass membrane protein</topology>
    </subcellularLocation>
</comment>
<comment type="alternative products">
    <event type="alternative splicing"/>
    <isoform>
        <id>P92941-1</id>
        <name>1</name>
        <sequence type="displayed"/>
    </isoform>
    <text>A number of isoforms are produced. According to EST sequences.</text>
</comment>
<comment type="tissue specificity">
    <text>Broadly expressed in the plant.</text>
</comment>
<comment type="induction">
    <text evidence="5">In shoots and roots by nitrate treatment.</text>
</comment>
<comment type="disruption phenotype">
    <text evidence="5">Loss-of-function mutation clca-1 leads to an altered nitrate content and hypersensitivity to chlorate.</text>
</comment>
<comment type="similarity">
    <text evidence="7">Belongs to the chloride channel (TC 2.A.49) family.</text>
</comment>
<protein>
    <recommendedName>
        <fullName>Chloride channel protein CLC-a</fullName>
        <shortName>AtCLC-a</shortName>
    </recommendedName>
    <alternativeName>
        <fullName>CBS domain-containing protein CBSCLC5</fullName>
    </alternativeName>
</protein>
<proteinExistence type="evidence at protein level"/>
<accession>P92941</accession>
<accession>O64990</accession>
<accession>Q93YS0</accession>
<feature type="chain" id="PRO_0000094465" description="Chloride channel protein CLC-a">
    <location>
        <begin position="1"/>
        <end position="775"/>
    </location>
</feature>
<feature type="transmembrane region" description="Helical; Name=1" evidence="2">
    <location>
        <begin position="88"/>
        <end position="108"/>
    </location>
</feature>
<feature type="transmembrane region" description="Helical; Name=2" evidence="2">
    <location>
        <begin position="131"/>
        <end position="151"/>
    </location>
</feature>
<feature type="transmembrane region" description="Helical; Name=3" evidence="2">
    <location>
        <begin position="178"/>
        <end position="198"/>
    </location>
</feature>
<feature type="transmembrane region" description="Helical; Name=4" evidence="2">
    <location>
        <begin position="206"/>
        <end position="226"/>
    </location>
</feature>
<feature type="transmembrane region" description="Helical; Name=5" evidence="2">
    <location>
        <begin position="248"/>
        <end position="268"/>
    </location>
</feature>
<feature type="transmembrane region" description="Helical; Name=6" evidence="2">
    <location>
        <begin position="278"/>
        <end position="298"/>
    </location>
</feature>
<feature type="transmembrane region" description="Helical; Name=7" evidence="2">
    <location>
        <begin position="328"/>
        <end position="348"/>
    </location>
</feature>
<feature type="transmembrane region" description="Helical; Name=8" evidence="2">
    <location>
        <begin position="371"/>
        <end position="391"/>
    </location>
</feature>
<feature type="transmembrane region" description="Helical; Name=9" evidence="2">
    <location>
        <begin position="453"/>
        <end position="473"/>
    </location>
</feature>
<feature type="transmembrane region" description="Helical; Name=10" evidence="2">
    <location>
        <begin position="478"/>
        <end position="498"/>
    </location>
</feature>
<feature type="transmembrane region" description="Helical; Name=11" evidence="2">
    <location>
        <begin position="510"/>
        <end position="530"/>
    </location>
</feature>
<feature type="transmembrane region" description="Helical; Name=12" evidence="2">
    <location>
        <begin position="531"/>
        <end position="551"/>
    </location>
</feature>
<feature type="transmembrane region" description="Helical; Name=13" evidence="2">
    <location>
        <begin position="730"/>
        <end position="750"/>
    </location>
</feature>
<feature type="domain" description="CBS 1" evidence="3">
    <location>
        <begin position="595"/>
        <end position="658"/>
    </location>
</feature>
<feature type="domain" description="CBS 2" evidence="3">
    <location>
        <begin position="703"/>
        <end position="768"/>
    </location>
</feature>
<feature type="region of interest" description="Disordered" evidence="4">
    <location>
        <begin position="1"/>
        <end position="28"/>
    </location>
</feature>
<feature type="sequence conflict" description="In Ref. 1; CAA96057." evidence="7" ref="1">
    <original>D</original>
    <variation>H</variation>
    <location>
        <position position="330"/>
    </location>
</feature>
<feature type="sequence conflict" description="In Ref. 5; AAL24139." evidence="7" ref="5">
    <original>Q</original>
    <variation>L</variation>
    <location>
        <position position="506"/>
    </location>
</feature>
<feature type="strand" evidence="9">
    <location>
        <begin position="44"/>
        <end position="47"/>
    </location>
</feature>
<feature type="strand" evidence="9">
    <location>
        <begin position="50"/>
        <end position="53"/>
    </location>
</feature>
<feature type="turn" evidence="8">
    <location>
        <begin position="65"/>
        <end position="67"/>
    </location>
</feature>
<feature type="helix" evidence="8">
    <location>
        <begin position="71"/>
        <end position="73"/>
    </location>
</feature>
<feature type="helix" evidence="8">
    <location>
        <begin position="76"/>
        <end position="124"/>
    </location>
</feature>
<feature type="helix" evidence="8">
    <location>
        <begin position="130"/>
        <end position="153"/>
    </location>
</feature>
<feature type="helix" evidence="8">
    <location>
        <begin position="155"/>
        <end position="157"/>
    </location>
</feature>
<feature type="helix" evidence="8">
    <location>
        <begin position="162"/>
        <end position="168"/>
    </location>
</feature>
<feature type="turn" evidence="8">
    <location>
        <begin position="169"/>
        <end position="171"/>
    </location>
</feature>
<feature type="helix" evidence="8">
    <location>
        <begin position="180"/>
        <end position="195"/>
    </location>
</feature>
<feature type="helix" evidence="8">
    <location>
        <begin position="203"/>
        <end position="219"/>
    </location>
</feature>
<feature type="helix" evidence="8">
    <location>
        <begin position="230"/>
        <end position="235"/>
    </location>
</feature>
<feature type="helix" evidence="8">
    <location>
        <begin position="238"/>
        <end position="257"/>
    </location>
</feature>
<feature type="helix" evidence="8">
    <location>
        <begin position="262"/>
        <end position="269"/>
    </location>
</feature>
<feature type="helix" evidence="8">
    <location>
        <begin position="277"/>
        <end position="299"/>
    </location>
</feature>
<feature type="strand" evidence="8">
    <location>
        <begin position="302"/>
        <end position="304"/>
    </location>
</feature>
<feature type="turn" evidence="8">
    <location>
        <begin position="305"/>
        <end position="310"/>
    </location>
</feature>
<feature type="strand" evidence="10">
    <location>
        <begin position="314"/>
        <end position="317"/>
    </location>
</feature>
<feature type="helix" evidence="8">
    <location>
        <begin position="328"/>
        <end position="330"/>
    </location>
</feature>
<feature type="helix" evidence="8">
    <location>
        <begin position="332"/>
        <end position="363"/>
    </location>
</feature>
<feature type="helix" evidence="8">
    <location>
        <begin position="368"/>
        <end position="386"/>
    </location>
</feature>
<feature type="helix" evidence="8">
    <location>
        <begin position="388"/>
        <end position="390"/>
    </location>
</feature>
<feature type="strand" evidence="9">
    <location>
        <begin position="394"/>
        <end position="396"/>
    </location>
</feature>
<feature type="strand" evidence="8">
    <location>
        <begin position="405"/>
        <end position="407"/>
    </location>
</feature>
<feature type="strand" evidence="8">
    <location>
        <begin position="409"/>
        <end position="415"/>
    </location>
</feature>
<feature type="strand" evidence="8">
    <location>
        <begin position="417"/>
        <end position="419"/>
    </location>
</feature>
<feature type="strand" evidence="9">
    <location>
        <begin position="421"/>
        <end position="427"/>
    </location>
</feature>
<feature type="turn" evidence="8">
    <location>
        <begin position="428"/>
        <end position="430"/>
    </location>
</feature>
<feature type="strand" evidence="8">
    <location>
        <begin position="431"/>
        <end position="433"/>
    </location>
</feature>
<feature type="helix" evidence="8">
    <location>
        <begin position="437"/>
        <end position="442"/>
    </location>
</feature>
<feature type="helix" evidence="8">
    <location>
        <begin position="453"/>
        <end position="469"/>
    </location>
</feature>
<feature type="strand" evidence="8">
    <location>
        <begin position="472"/>
        <end position="476"/>
    </location>
</feature>
<feature type="helix" evidence="8">
    <location>
        <begin position="480"/>
        <end position="497"/>
    </location>
</feature>
<feature type="helix" evidence="8">
    <location>
        <begin position="506"/>
        <end position="522"/>
    </location>
</feature>
<feature type="helix" evidence="8">
    <location>
        <begin position="526"/>
        <end position="536"/>
    </location>
</feature>
<feature type="turn" evidence="8">
    <location>
        <begin position="539"/>
        <end position="541"/>
    </location>
</feature>
<feature type="helix" evidence="8">
    <location>
        <begin position="542"/>
        <end position="556"/>
    </location>
</feature>
<feature type="turn" evidence="8">
    <location>
        <begin position="557"/>
        <end position="559"/>
    </location>
</feature>
<feature type="helix" evidence="8">
    <location>
        <begin position="563"/>
        <end position="570"/>
    </location>
</feature>
<feature type="turn" evidence="8">
    <location>
        <begin position="582"/>
        <end position="586"/>
    </location>
</feature>
<feature type="helix" evidence="8">
    <location>
        <begin position="589"/>
        <end position="594"/>
    </location>
</feature>
<feature type="strand" evidence="8">
    <location>
        <begin position="602"/>
        <end position="607"/>
    </location>
</feature>
<feature type="helix" evidence="8">
    <location>
        <begin position="608"/>
        <end position="616"/>
    </location>
</feature>
<feature type="strand" evidence="8">
    <location>
        <begin position="621"/>
        <end position="626"/>
    </location>
</feature>
<feature type="strand" evidence="8">
    <location>
        <begin position="639"/>
        <end position="642"/>
    </location>
</feature>
<feature type="helix" evidence="8">
    <location>
        <begin position="643"/>
        <end position="652"/>
    </location>
</feature>
<feature type="strand" evidence="8">
    <location>
        <begin position="656"/>
        <end position="658"/>
    </location>
</feature>
<feature type="turn" evidence="8">
    <location>
        <begin position="664"/>
        <end position="670"/>
    </location>
</feature>
<feature type="helix" evidence="8">
    <location>
        <begin position="673"/>
        <end position="677"/>
    </location>
</feature>
<feature type="helix" evidence="9">
    <location>
        <begin position="683"/>
        <end position="685"/>
    </location>
</feature>
<feature type="helix" evidence="8">
    <location>
        <begin position="692"/>
        <end position="694"/>
    </location>
</feature>
<feature type="strand" evidence="8">
    <location>
        <begin position="695"/>
        <end position="698"/>
    </location>
</feature>
<feature type="helix" evidence="9">
    <location>
        <begin position="700"/>
        <end position="702"/>
    </location>
</feature>
<feature type="strand" evidence="8">
    <location>
        <begin position="703"/>
        <end position="706"/>
    </location>
</feature>
<feature type="strand" evidence="9">
    <location>
        <begin position="709"/>
        <end position="711"/>
    </location>
</feature>
<feature type="helix" evidence="8">
    <location>
        <begin position="716"/>
        <end position="725"/>
    </location>
</feature>
<feature type="strand" evidence="8">
    <location>
        <begin position="731"/>
        <end position="733"/>
    </location>
</feature>
<feature type="strand" evidence="8">
    <location>
        <begin position="747"/>
        <end position="749"/>
    </location>
</feature>
<feature type="helix" evidence="8">
    <location>
        <begin position="751"/>
        <end position="754"/>
    </location>
</feature>
<feature type="helix" evidence="8">
    <location>
        <begin position="756"/>
        <end position="762"/>
    </location>
</feature>
<feature type="helix" evidence="9">
    <location>
        <begin position="764"/>
        <end position="766"/>
    </location>
</feature>
<name>CLCA_ARATH</name>
<dbReference type="EMBL" id="Z71445">
    <property type="protein sequence ID" value="CAA96057.1"/>
    <property type="molecule type" value="mRNA"/>
</dbReference>
<dbReference type="EMBL" id="AF044313">
    <property type="protein sequence ID" value="AAC05742.1"/>
    <property type="molecule type" value="mRNA"/>
</dbReference>
<dbReference type="EMBL" id="AB011477">
    <property type="protein sequence ID" value="BAB11351.1"/>
    <property type="molecule type" value="Genomic_DNA"/>
</dbReference>
<dbReference type="EMBL" id="CP002688">
    <property type="protein sequence ID" value="AED94612.1"/>
    <property type="molecule type" value="Genomic_DNA"/>
</dbReference>
<dbReference type="EMBL" id="AY059791">
    <property type="protein sequence ID" value="AAL24139.1"/>
    <property type="molecule type" value="mRNA"/>
</dbReference>
<dbReference type="EMBL" id="AY150506">
    <property type="protein sequence ID" value="AAN13022.1"/>
    <property type="molecule type" value="mRNA"/>
</dbReference>
<dbReference type="PIR" id="T52107">
    <property type="entry name" value="T52107"/>
</dbReference>
<dbReference type="RefSeq" id="NP_198905.1">
    <molecule id="P92941-1"/>
    <property type="nucleotide sequence ID" value="NM_123454.3"/>
</dbReference>
<dbReference type="PDB" id="7XA9">
    <property type="method" value="EM"/>
    <property type="resolution" value="2.84 A"/>
    <property type="chains" value="A/B=1-775"/>
</dbReference>
<dbReference type="PDB" id="8IAB">
    <property type="method" value="EM"/>
    <property type="resolution" value="2.96 A"/>
    <property type="chains" value="A/B=1-775"/>
</dbReference>
<dbReference type="PDB" id="8IAD">
    <property type="method" value="EM"/>
    <property type="resolution" value="3.16 A"/>
    <property type="chains" value="A/B=1-775"/>
</dbReference>
<dbReference type="PDBsum" id="7XA9"/>
<dbReference type="PDBsum" id="8IAB"/>
<dbReference type="PDBsum" id="8IAD"/>
<dbReference type="EMDB" id="EMD-33088"/>
<dbReference type="EMDB" id="EMD-35299"/>
<dbReference type="EMDB" id="EMD-35300"/>
<dbReference type="SMR" id="P92941"/>
<dbReference type="BioGRID" id="19341">
    <property type="interactions" value="5"/>
</dbReference>
<dbReference type="FunCoup" id="P92941">
    <property type="interactions" value="2452"/>
</dbReference>
<dbReference type="IntAct" id="P92941">
    <property type="interactions" value="5"/>
</dbReference>
<dbReference type="STRING" id="3702.P92941"/>
<dbReference type="iPTMnet" id="P92941"/>
<dbReference type="PaxDb" id="3702-AT5G40890.1"/>
<dbReference type="ProteomicsDB" id="246817">
    <molecule id="P92941-1"/>
</dbReference>
<dbReference type="EnsemblPlants" id="AT5G40890.1">
    <molecule id="P92941-1"/>
    <property type="protein sequence ID" value="AT5G40890.1"/>
    <property type="gene ID" value="AT5G40890"/>
</dbReference>
<dbReference type="GeneID" id="834090"/>
<dbReference type="Gramene" id="AT5G40890.1">
    <molecule id="P92941-1"/>
    <property type="protein sequence ID" value="AT5G40890.1"/>
    <property type="gene ID" value="AT5G40890"/>
</dbReference>
<dbReference type="KEGG" id="ath:AT5G40890"/>
<dbReference type="Araport" id="AT5G40890"/>
<dbReference type="TAIR" id="AT5G40890">
    <property type="gene designation" value="CLC-A"/>
</dbReference>
<dbReference type="eggNOG" id="KOG0474">
    <property type="taxonomic scope" value="Eukaryota"/>
</dbReference>
<dbReference type="InParanoid" id="P92941"/>
<dbReference type="OrthoDB" id="428525at2759"/>
<dbReference type="PhylomeDB" id="P92941"/>
<dbReference type="PRO" id="PR:P92941"/>
<dbReference type="Proteomes" id="UP000006548">
    <property type="component" value="Chromosome 5"/>
</dbReference>
<dbReference type="ExpressionAtlas" id="P92941">
    <property type="expression patterns" value="baseline and differential"/>
</dbReference>
<dbReference type="GO" id="GO:0034707">
    <property type="term" value="C:chloride channel complex"/>
    <property type="evidence" value="ECO:0007669"/>
    <property type="project" value="UniProtKB-KW"/>
</dbReference>
<dbReference type="GO" id="GO:0015112">
    <property type="term" value="F:nitrate transmembrane transporter activity"/>
    <property type="evidence" value="ECO:0000314"/>
    <property type="project" value="TAIR"/>
</dbReference>
<dbReference type="GO" id="GO:0005247">
    <property type="term" value="F:voltage-gated chloride channel activity"/>
    <property type="evidence" value="ECO:0007669"/>
    <property type="project" value="InterPro"/>
</dbReference>
<dbReference type="GO" id="GO:0006821">
    <property type="term" value="P:chloride transport"/>
    <property type="evidence" value="ECO:0000314"/>
    <property type="project" value="TAIR"/>
</dbReference>
<dbReference type="GO" id="GO:0015706">
    <property type="term" value="P:nitrate transmembrane transport"/>
    <property type="evidence" value="ECO:0000314"/>
    <property type="project" value="TAIR"/>
</dbReference>
<dbReference type="GO" id="GO:0010167">
    <property type="term" value="P:response to nitrate"/>
    <property type="evidence" value="ECO:0000315"/>
    <property type="project" value="TAIR"/>
</dbReference>
<dbReference type="CDD" id="cd04591">
    <property type="entry name" value="CBS_pair_voltage-gated_CLC_euk_bac"/>
    <property type="match status" value="1"/>
</dbReference>
<dbReference type="CDD" id="cd03685">
    <property type="entry name" value="ClC_6_like"/>
    <property type="match status" value="1"/>
</dbReference>
<dbReference type="FunFam" id="1.10.3080.10:FF:000004">
    <property type="entry name" value="Chloride channel ClC3"/>
    <property type="match status" value="1"/>
</dbReference>
<dbReference type="Gene3D" id="3.10.580.10">
    <property type="entry name" value="CBS-domain"/>
    <property type="match status" value="1"/>
</dbReference>
<dbReference type="Gene3D" id="1.10.3080.10">
    <property type="entry name" value="Clc chloride channel"/>
    <property type="match status" value="1"/>
</dbReference>
<dbReference type="InterPro" id="IPR000644">
    <property type="entry name" value="CBS_dom"/>
</dbReference>
<dbReference type="InterPro" id="IPR046342">
    <property type="entry name" value="CBS_dom_sf"/>
</dbReference>
<dbReference type="InterPro" id="IPR051280">
    <property type="entry name" value="Cl-channel/antiporter"/>
</dbReference>
<dbReference type="InterPro" id="IPR014743">
    <property type="entry name" value="Cl-channel_core"/>
</dbReference>
<dbReference type="InterPro" id="IPR002251">
    <property type="entry name" value="Cl_channel_pln"/>
</dbReference>
<dbReference type="InterPro" id="IPR001807">
    <property type="entry name" value="ClC"/>
</dbReference>
<dbReference type="PANTHER" id="PTHR11689">
    <property type="entry name" value="CHLORIDE CHANNEL PROTEIN CLC FAMILY MEMBER"/>
    <property type="match status" value="1"/>
</dbReference>
<dbReference type="PANTHER" id="PTHR11689:SF67">
    <property type="entry name" value="CHLORIDE CHANNEL PROTEIN CLC-A"/>
    <property type="match status" value="1"/>
</dbReference>
<dbReference type="Pfam" id="PF00571">
    <property type="entry name" value="CBS"/>
    <property type="match status" value="1"/>
</dbReference>
<dbReference type="Pfam" id="PF00654">
    <property type="entry name" value="Voltage_CLC"/>
    <property type="match status" value="1"/>
</dbReference>
<dbReference type="PRINTS" id="PR00762">
    <property type="entry name" value="CLCHANNEL"/>
</dbReference>
<dbReference type="PRINTS" id="PR01120">
    <property type="entry name" value="CLCHANNELPLT"/>
</dbReference>
<dbReference type="SMART" id="SM00116">
    <property type="entry name" value="CBS"/>
    <property type="match status" value="2"/>
</dbReference>
<dbReference type="SUPFAM" id="SSF54631">
    <property type="entry name" value="CBS-domain pair"/>
    <property type="match status" value="1"/>
</dbReference>
<dbReference type="SUPFAM" id="SSF81340">
    <property type="entry name" value="Clc chloride channel"/>
    <property type="match status" value="1"/>
</dbReference>
<dbReference type="PROSITE" id="PS51371">
    <property type="entry name" value="CBS"/>
    <property type="match status" value="2"/>
</dbReference>
<reference key="1">
    <citation type="journal article" date="1996" name="J. Biol. Chem.">
        <title>A family of putative chloride channels from Arabidopsis and functional complementation of a yeast strain with a CLC gene disruption.</title>
        <authorList>
            <person name="Hechenberger M."/>
            <person name="Schwappach B."/>
            <person name="Fischer W.N."/>
            <person name="Frommer W.B."/>
            <person name="Jentsch T.J."/>
            <person name="Steinmeyer K."/>
        </authorList>
    </citation>
    <scope>NUCLEOTIDE SEQUENCE [MRNA]</scope>
    <scope>CHARACTERIZATION</scope>
    <source>
        <strain>cv. Columbia</strain>
    </source>
</reference>
<reference key="2">
    <citation type="journal article" date="2000" name="Plant J.">
        <title>Disruption of putative anion channel gene AtCLC-a in Arabidopsis suggests a role in the regulation of nitrate content.</title>
        <authorList>
            <person name="Geelen D."/>
            <person name="Lurin C."/>
            <person name="Bouchez D."/>
            <person name="Frachisse J.-M."/>
            <person name="Lelievre F."/>
            <person name="Courtial B."/>
            <person name="Barbier-Brygoo H."/>
            <person name="Maurel C."/>
        </authorList>
    </citation>
    <scope>NUCLEOTIDE SEQUENCE [MRNA]</scope>
    <scope>FUNCTION</scope>
    <scope>INDUCTION</scope>
    <scope>DISRUPTION PHENOTYPE</scope>
    <source>
        <strain>cv. Wassilewskija</strain>
    </source>
</reference>
<reference key="3">
    <citation type="journal article" date="1998" name="DNA Res.">
        <title>Structural analysis of Arabidopsis thaliana chromosome 5. V. Sequence features of the regions of 1,381,565 bp covered by twenty one physically assigned P1 and TAC clones.</title>
        <authorList>
            <person name="Kaneko T."/>
            <person name="Kotani H."/>
            <person name="Nakamura Y."/>
            <person name="Sato S."/>
            <person name="Asamizu E."/>
            <person name="Miyajima N."/>
            <person name="Tabata S."/>
        </authorList>
    </citation>
    <scope>NUCLEOTIDE SEQUENCE [LARGE SCALE GENOMIC DNA]</scope>
    <source>
        <strain>cv. Columbia</strain>
    </source>
</reference>
<reference key="4">
    <citation type="journal article" date="2017" name="Plant J.">
        <title>Araport11: a complete reannotation of the Arabidopsis thaliana reference genome.</title>
        <authorList>
            <person name="Cheng C.Y."/>
            <person name="Krishnakumar V."/>
            <person name="Chan A.P."/>
            <person name="Thibaud-Nissen F."/>
            <person name="Schobel S."/>
            <person name="Town C.D."/>
        </authorList>
    </citation>
    <scope>GENOME REANNOTATION</scope>
    <source>
        <strain>cv. Columbia</strain>
    </source>
</reference>
<reference key="5">
    <citation type="journal article" date="2003" name="Science">
        <title>Empirical analysis of transcriptional activity in the Arabidopsis genome.</title>
        <authorList>
            <person name="Yamada K."/>
            <person name="Lim J."/>
            <person name="Dale J.M."/>
            <person name="Chen H."/>
            <person name="Shinn P."/>
            <person name="Palm C.J."/>
            <person name="Southwick A.M."/>
            <person name="Wu H.C."/>
            <person name="Kim C.J."/>
            <person name="Nguyen M."/>
            <person name="Pham P.K."/>
            <person name="Cheuk R.F."/>
            <person name="Karlin-Newmann G."/>
            <person name="Liu S.X."/>
            <person name="Lam B."/>
            <person name="Sakano H."/>
            <person name="Wu T."/>
            <person name="Yu G."/>
            <person name="Miranda M."/>
            <person name="Quach H.L."/>
            <person name="Tripp M."/>
            <person name="Chang C.H."/>
            <person name="Lee J.M."/>
            <person name="Toriumi M.J."/>
            <person name="Chan M.M."/>
            <person name="Tang C.C."/>
            <person name="Onodera C.S."/>
            <person name="Deng J.M."/>
            <person name="Akiyama K."/>
            <person name="Ansari Y."/>
            <person name="Arakawa T."/>
            <person name="Banh J."/>
            <person name="Banno F."/>
            <person name="Bowser L."/>
            <person name="Brooks S.Y."/>
            <person name="Carninci P."/>
            <person name="Chao Q."/>
            <person name="Choy N."/>
            <person name="Enju A."/>
            <person name="Goldsmith A.D."/>
            <person name="Gurjal M."/>
            <person name="Hansen N.F."/>
            <person name="Hayashizaki Y."/>
            <person name="Johnson-Hopson C."/>
            <person name="Hsuan V.W."/>
            <person name="Iida K."/>
            <person name="Karnes M."/>
            <person name="Khan S."/>
            <person name="Koesema E."/>
            <person name="Ishida J."/>
            <person name="Jiang P.X."/>
            <person name="Jones T."/>
            <person name="Kawai J."/>
            <person name="Kamiya A."/>
            <person name="Meyers C."/>
            <person name="Nakajima M."/>
            <person name="Narusaka M."/>
            <person name="Seki M."/>
            <person name="Sakurai T."/>
            <person name="Satou M."/>
            <person name="Tamse R."/>
            <person name="Vaysberg M."/>
            <person name="Wallender E.K."/>
            <person name="Wong C."/>
            <person name="Yamamura Y."/>
            <person name="Yuan S."/>
            <person name="Shinozaki K."/>
            <person name="Davis R.W."/>
            <person name="Theologis A."/>
            <person name="Ecker J.R."/>
        </authorList>
    </citation>
    <scope>NUCLEOTIDE SEQUENCE [LARGE SCALE MRNA]</scope>
    <source>
        <strain>cv. Columbia</strain>
    </source>
</reference>
<reference key="6">
    <citation type="journal article" date="2009" name="BMC Genomics">
        <title>Genome wide expression analysis of CBS domain containing proteins in Arabidopsis thaliana (L.) Heynh and Oryza sativa L. reveals their developmental and stress regulation.</title>
        <authorList>
            <person name="Kushwaha H.R."/>
            <person name="Singh A.K."/>
            <person name="Sopory S.K."/>
            <person name="Singla-Pareek S.L."/>
            <person name="Pareek A."/>
        </authorList>
    </citation>
    <scope>GENE FAMILY</scope>
    <scope>NOMENCLATURE</scope>
</reference>
<reference key="7">
    <citation type="journal article" date="2009" name="Plant Physiol.">
        <title>Large-scale Arabidopsis phosphoproteome profiling reveals novel chloroplast kinase substrates and phosphorylation networks.</title>
        <authorList>
            <person name="Reiland S."/>
            <person name="Messerli G."/>
            <person name="Baerenfaller K."/>
            <person name="Gerrits B."/>
            <person name="Endler A."/>
            <person name="Grossmann J."/>
            <person name="Gruissem W."/>
            <person name="Baginsky S."/>
        </authorList>
    </citation>
    <scope>IDENTIFICATION BY MASS SPECTROMETRY [LARGE SCALE ANALYSIS]</scope>
</reference>
<reference key="8">
    <citation type="journal article" date="2017" name="Plant Cell Environ.">
        <title>Overexpression of PP2A-C5 that encodes the catalytic subunit 5 of protein phosphatase 2A in Arabidopsis confers better root and shoot development under salt conditions.</title>
        <authorList>
            <person name="Hu R."/>
            <person name="Zhu Y."/>
            <person name="Wei J."/>
            <person name="Chen J."/>
            <person name="Shi H."/>
            <person name="Shen G."/>
            <person name="Zhang H."/>
        </authorList>
    </citation>
    <scope>INTERACTION WITH PP2A5</scope>
</reference>
<organism>
    <name type="scientific">Arabidopsis thaliana</name>
    <name type="common">Mouse-ear cress</name>
    <dbReference type="NCBI Taxonomy" id="3702"/>
    <lineage>
        <taxon>Eukaryota</taxon>
        <taxon>Viridiplantae</taxon>
        <taxon>Streptophyta</taxon>
        <taxon>Embryophyta</taxon>
        <taxon>Tracheophyta</taxon>
        <taxon>Spermatophyta</taxon>
        <taxon>Magnoliopsida</taxon>
        <taxon>eudicotyledons</taxon>
        <taxon>Gunneridae</taxon>
        <taxon>Pentapetalae</taxon>
        <taxon>rosids</taxon>
        <taxon>malvids</taxon>
        <taxon>Brassicales</taxon>
        <taxon>Brassicaceae</taxon>
        <taxon>Camelineae</taxon>
        <taxon>Arabidopsis</taxon>
    </lineage>
</organism>
<evidence type="ECO:0000250" key="1"/>
<evidence type="ECO:0000255" key="2"/>
<evidence type="ECO:0000255" key="3">
    <source>
        <dbReference type="PROSITE-ProRule" id="PRU00703"/>
    </source>
</evidence>
<evidence type="ECO:0000256" key="4">
    <source>
        <dbReference type="SAM" id="MobiDB-lite"/>
    </source>
</evidence>
<evidence type="ECO:0000269" key="5">
    <source>
    </source>
</evidence>
<evidence type="ECO:0000269" key="6">
    <source>
    </source>
</evidence>
<evidence type="ECO:0000305" key="7"/>
<evidence type="ECO:0007829" key="8">
    <source>
        <dbReference type="PDB" id="7XA9"/>
    </source>
</evidence>
<evidence type="ECO:0007829" key="9">
    <source>
        <dbReference type="PDB" id="8IAB"/>
    </source>
</evidence>
<evidence type="ECO:0007829" key="10">
    <source>
        <dbReference type="PDB" id="8IAD"/>
    </source>
</evidence>